<feature type="chain" id="PRO_1000021477" description="Ribonuclease P protein component">
    <location>
        <begin position="1"/>
        <end position="119"/>
    </location>
</feature>
<accession>Q1JNK3</accession>
<comment type="function">
    <text evidence="1">RNaseP catalyzes the removal of the 5'-leader sequence from pre-tRNA to produce the mature 5'-terminus. It can also cleave other RNA substrates such as 4.5S RNA. The protein component plays an auxiliary but essential role in vivo by binding to the 5'-leader sequence and broadening the substrate specificity of the ribozyme.</text>
</comment>
<comment type="catalytic activity">
    <reaction evidence="1">
        <text>Endonucleolytic cleavage of RNA, removing 5'-extranucleotides from tRNA precursor.</text>
        <dbReference type="EC" id="3.1.26.5"/>
    </reaction>
</comment>
<comment type="subunit">
    <text evidence="1">Consists of a catalytic RNA component (M1 or rnpB) and a protein subunit.</text>
</comment>
<comment type="similarity">
    <text evidence="1">Belongs to the RnpA family.</text>
</comment>
<gene>
    <name evidence="1" type="primary">rnpA</name>
    <name type="ordered locus">MGAS9429_Spy0208</name>
</gene>
<proteinExistence type="inferred from homology"/>
<name>RNPA_STRPC</name>
<reference key="1">
    <citation type="journal article" date="2006" name="Proc. Natl. Acad. Sci. U.S.A.">
        <title>Molecular genetic anatomy of inter- and intraserotype variation in the human bacterial pathogen group A Streptococcus.</title>
        <authorList>
            <person name="Beres S.B."/>
            <person name="Richter E.W."/>
            <person name="Nagiec M.J."/>
            <person name="Sumby P."/>
            <person name="Porcella S.F."/>
            <person name="DeLeo F.R."/>
            <person name="Musser J.M."/>
        </authorList>
    </citation>
    <scope>NUCLEOTIDE SEQUENCE [LARGE SCALE GENOMIC DNA]</scope>
    <source>
        <strain>MGAS9429</strain>
    </source>
</reference>
<evidence type="ECO:0000255" key="1">
    <source>
        <dbReference type="HAMAP-Rule" id="MF_00227"/>
    </source>
</evidence>
<protein>
    <recommendedName>
        <fullName evidence="1">Ribonuclease P protein component</fullName>
        <shortName evidence="1">RNase P protein</shortName>
        <shortName evidence="1">RNaseP protein</shortName>
        <ecNumber evidence="1">3.1.26.5</ecNumber>
    </recommendedName>
    <alternativeName>
        <fullName evidence="1">Protein C5</fullName>
    </alternativeName>
</protein>
<organism>
    <name type="scientific">Streptococcus pyogenes serotype M12 (strain MGAS9429)</name>
    <dbReference type="NCBI Taxonomy" id="370551"/>
    <lineage>
        <taxon>Bacteria</taxon>
        <taxon>Bacillati</taxon>
        <taxon>Bacillota</taxon>
        <taxon>Bacilli</taxon>
        <taxon>Lactobacillales</taxon>
        <taxon>Streptococcaceae</taxon>
        <taxon>Streptococcus</taxon>
    </lineage>
</organism>
<keyword id="KW-0255">Endonuclease</keyword>
<keyword id="KW-0378">Hydrolase</keyword>
<keyword id="KW-0540">Nuclease</keyword>
<keyword id="KW-0694">RNA-binding</keyword>
<keyword id="KW-0819">tRNA processing</keyword>
<dbReference type="EC" id="3.1.26.5" evidence="1"/>
<dbReference type="EMBL" id="CP000259">
    <property type="protein sequence ID" value="ABF31396.1"/>
    <property type="molecule type" value="Genomic_DNA"/>
</dbReference>
<dbReference type="RefSeq" id="WP_002991183.1">
    <property type="nucleotide sequence ID" value="NC_008021.1"/>
</dbReference>
<dbReference type="SMR" id="Q1JNK3"/>
<dbReference type="KEGG" id="spk:MGAS9429_Spy0208"/>
<dbReference type="HOGENOM" id="CLU_117179_9_1_9"/>
<dbReference type="Proteomes" id="UP000002433">
    <property type="component" value="Chromosome"/>
</dbReference>
<dbReference type="GO" id="GO:0030677">
    <property type="term" value="C:ribonuclease P complex"/>
    <property type="evidence" value="ECO:0007669"/>
    <property type="project" value="TreeGrafter"/>
</dbReference>
<dbReference type="GO" id="GO:0042781">
    <property type="term" value="F:3'-tRNA processing endoribonuclease activity"/>
    <property type="evidence" value="ECO:0007669"/>
    <property type="project" value="TreeGrafter"/>
</dbReference>
<dbReference type="GO" id="GO:0004526">
    <property type="term" value="F:ribonuclease P activity"/>
    <property type="evidence" value="ECO:0007669"/>
    <property type="project" value="UniProtKB-UniRule"/>
</dbReference>
<dbReference type="GO" id="GO:0000049">
    <property type="term" value="F:tRNA binding"/>
    <property type="evidence" value="ECO:0007669"/>
    <property type="project" value="UniProtKB-UniRule"/>
</dbReference>
<dbReference type="GO" id="GO:0001682">
    <property type="term" value="P:tRNA 5'-leader removal"/>
    <property type="evidence" value="ECO:0007669"/>
    <property type="project" value="UniProtKB-UniRule"/>
</dbReference>
<dbReference type="FunFam" id="3.30.230.10:FF:000021">
    <property type="entry name" value="Ribonuclease P protein component"/>
    <property type="match status" value="1"/>
</dbReference>
<dbReference type="Gene3D" id="3.30.230.10">
    <property type="match status" value="1"/>
</dbReference>
<dbReference type="HAMAP" id="MF_00227">
    <property type="entry name" value="RNase_P"/>
    <property type="match status" value="1"/>
</dbReference>
<dbReference type="InterPro" id="IPR020568">
    <property type="entry name" value="Ribosomal_Su5_D2-typ_SF"/>
</dbReference>
<dbReference type="InterPro" id="IPR014721">
    <property type="entry name" value="Ribsml_uS5_D2-typ_fold_subgr"/>
</dbReference>
<dbReference type="InterPro" id="IPR000100">
    <property type="entry name" value="RNase_P"/>
</dbReference>
<dbReference type="InterPro" id="IPR020539">
    <property type="entry name" value="RNase_P_CS"/>
</dbReference>
<dbReference type="NCBIfam" id="TIGR00188">
    <property type="entry name" value="rnpA"/>
    <property type="match status" value="1"/>
</dbReference>
<dbReference type="PANTHER" id="PTHR33992">
    <property type="entry name" value="RIBONUCLEASE P PROTEIN COMPONENT"/>
    <property type="match status" value="1"/>
</dbReference>
<dbReference type="PANTHER" id="PTHR33992:SF1">
    <property type="entry name" value="RIBONUCLEASE P PROTEIN COMPONENT"/>
    <property type="match status" value="1"/>
</dbReference>
<dbReference type="Pfam" id="PF00825">
    <property type="entry name" value="Ribonuclease_P"/>
    <property type="match status" value="1"/>
</dbReference>
<dbReference type="SUPFAM" id="SSF54211">
    <property type="entry name" value="Ribosomal protein S5 domain 2-like"/>
    <property type="match status" value="1"/>
</dbReference>
<dbReference type="PROSITE" id="PS00648">
    <property type="entry name" value="RIBONUCLEASE_P"/>
    <property type="match status" value="1"/>
</dbReference>
<sequence>MKKTYRVKCEKDFQAIFKDGKSTANRKFVIYHLNRGQDHFRVGISVGKKIGNAVTRNAVKRKIRHVIMALGYQLKSEDFVVIARKGVESLEYQELQQNLHHVLKLAQLLEKGFESEEKH</sequence>